<proteinExistence type="inferred from homology"/>
<keyword id="KW-0687">Ribonucleoprotein</keyword>
<keyword id="KW-0689">Ribosomal protein</keyword>
<sequence>MSLTNEQIIEAIGQKTVLEIVELIKAMEETFGVTAAAAVAAGPAVAAAAAEEQTEFNVVLTEAGDKKVNVIKAVRELTGLGLKEAKEKVDGAPQVIAEGVSKEAAEDAKKKLEEAGAKVELK</sequence>
<evidence type="ECO:0000255" key="1">
    <source>
        <dbReference type="HAMAP-Rule" id="MF_00368"/>
    </source>
</evidence>
<evidence type="ECO:0000305" key="2"/>
<gene>
    <name evidence="1" type="primary">rplL</name>
    <name type="ordered locus">PSEEN0481</name>
</gene>
<dbReference type="EMBL" id="CT573326">
    <property type="protein sequence ID" value="CAK13428.1"/>
    <property type="molecule type" value="Genomic_DNA"/>
</dbReference>
<dbReference type="RefSeq" id="WP_011531883.1">
    <property type="nucleotide sequence ID" value="NC_008027.1"/>
</dbReference>
<dbReference type="SMR" id="Q1IFX4"/>
<dbReference type="STRING" id="384676.PSEEN0481"/>
<dbReference type="GeneID" id="58770494"/>
<dbReference type="KEGG" id="pen:PSEEN0481"/>
<dbReference type="eggNOG" id="COG0222">
    <property type="taxonomic scope" value="Bacteria"/>
</dbReference>
<dbReference type="HOGENOM" id="CLU_086499_3_2_6"/>
<dbReference type="OrthoDB" id="9811748at2"/>
<dbReference type="Proteomes" id="UP000000658">
    <property type="component" value="Chromosome"/>
</dbReference>
<dbReference type="GO" id="GO:0022625">
    <property type="term" value="C:cytosolic large ribosomal subunit"/>
    <property type="evidence" value="ECO:0007669"/>
    <property type="project" value="TreeGrafter"/>
</dbReference>
<dbReference type="GO" id="GO:0003729">
    <property type="term" value="F:mRNA binding"/>
    <property type="evidence" value="ECO:0007669"/>
    <property type="project" value="TreeGrafter"/>
</dbReference>
<dbReference type="GO" id="GO:0003735">
    <property type="term" value="F:structural constituent of ribosome"/>
    <property type="evidence" value="ECO:0007669"/>
    <property type="project" value="InterPro"/>
</dbReference>
<dbReference type="GO" id="GO:0006412">
    <property type="term" value="P:translation"/>
    <property type="evidence" value="ECO:0007669"/>
    <property type="project" value="UniProtKB-UniRule"/>
</dbReference>
<dbReference type="CDD" id="cd00387">
    <property type="entry name" value="Ribosomal_L7_L12"/>
    <property type="match status" value="1"/>
</dbReference>
<dbReference type="FunFam" id="3.30.1390.10:FF:000001">
    <property type="entry name" value="50S ribosomal protein L7/L12"/>
    <property type="match status" value="1"/>
</dbReference>
<dbReference type="Gene3D" id="3.30.1390.10">
    <property type="match status" value="1"/>
</dbReference>
<dbReference type="Gene3D" id="1.20.5.710">
    <property type="entry name" value="Single helix bin"/>
    <property type="match status" value="1"/>
</dbReference>
<dbReference type="HAMAP" id="MF_00368">
    <property type="entry name" value="Ribosomal_bL12"/>
    <property type="match status" value="1"/>
</dbReference>
<dbReference type="InterPro" id="IPR000206">
    <property type="entry name" value="Ribosomal_bL12"/>
</dbReference>
<dbReference type="InterPro" id="IPR013823">
    <property type="entry name" value="Ribosomal_bL12_C"/>
</dbReference>
<dbReference type="InterPro" id="IPR014719">
    <property type="entry name" value="Ribosomal_bL12_C/ClpS-like"/>
</dbReference>
<dbReference type="InterPro" id="IPR008932">
    <property type="entry name" value="Ribosomal_bL12_oligo"/>
</dbReference>
<dbReference type="InterPro" id="IPR036235">
    <property type="entry name" value="Ribosomal_bL12_oligo_N_sf"/>
</dbReference>
<dbReference type="NCBIfam" id="TIGR00855">
    <property type="entry name" value="L12"/>
    <property type="match status" value="1"/>
</dbReference>
<dbReference type="PANTHER" id="PTHR45987">
    <property type="entry name" value="39S RIBOSOMAL PROTEIN L12"/>
    <property type="match status" value="1"/>
</dbReference>
<dbReference type="PANTHER" id="PTHR45987:SF4">
    <property type="entry name" value="LARGE RIBOSOMAL SUBUNIT PROTEIN BL12M"/>
    <property type="match status" value="1"/>
</dbReference>
<dbReference type="Pfam" id="PF00542">
    <property type="entry name" value="Ribosomal_L12"/>
    <property type="match status" value="1"/>
</dbReference>
<dbReference type="Pfam" id="PF16320">
    <property type="entry name" value="Ribosomal_L12_N"/>
    <property type="match status" value="1"/>
</dbReference>
<dbReference type="SUPFAM" id="SSF54736">
    <property type="entry name" value="ClpS-like"/>
    <property type="match status" value="1"/>
</dbReference>
<dbReference type="SUPFAM" id="SSF48300">
    <property type="entry name" value="Ribosomal protein L7/12, oligomerisation (N-terminal) domain"/>
    <property type="match status" value="1"/>
</dbReference>
<reference key="1">
    <citation type="journal article" date="2006" name="Nat. Biotechnol.">
        <title>Complete genome sequence of the entomopathogenic and metabolically versatile soil bacterium Pseudomonas entomophila.</title>
        <authorList>
            <person name="Vodovar N."/>
            <person name="Vallenet D."/>
            <person name="Cruveiller S."/>
            <person name="Rouy Z."/>
            <person name="Barbe V."/>
            <person name="Acosta C."/>
            <person name="Cattolico L."/>
            <person name="Jubin C."/>
            <person name="Lajus A."/>
            <person name="Segurens B."/>
            <person name="Vacherie B."/>
            <person name="Wincker P."/>
            <person name="Weissenbach J."/>
            <person name="Lemaitre B."/>
            <person name="Medigue C."/>
            <person name="Boccard F."/>
        </authorList>
    </citation>
    <scope>NUCLEOTIDE SEQUENCE [LARGE SCALE GENOMIC DNA]</scope>
    <source>
        <strain>L48</strain>
    </source>
</reference>
<comment type="function">
    <text evidence="1">Forms part of the ribosomal stalk which helps the ribosome interact with GTP-bound translation factors. Is thus essential for accurate translation.</text>
</comment>
<comment type="subunit">
    <text evidence="1">Homodimer. Part of the ribosomal stalk of the 50S ribosomal subunit. Forms a multimeric L10(L12)X complex, where L10 forms an elongated spine to which 2 to 4 L12 dimers bind in a sequential fashion. Binds GTP-bound translation factors.</text>
</comment>
<comment type="similarity">
    <text evidence="1">Belongs to the bacterial ribosomal protein bL12 family.</text>
</comment>
<feature type="chain" id="PRO_1000007063" description="Large ribosomal subunit protein bL12">
    <location>
        <begin position="1"/>
        <end position="122"/>
    </location>
</feature>
<name>RL7_PSEE4</name>
<accession>Q1IFX4</accession>
<organism>
    <name type="scientific">Pseudomonas entomophila (strain L48)</name>
    <dbReference type="NCBI Taxonomy" id="384676"/>
    <lineage>
        <taxon>Bacteria</taxon>
        <taxon>Pseudomonadati</taxon>
        <taxon>Pseudomonadota</taxon>
        <taxon>Gammaproteobacteria</taxon>
        <taxon>Pseudomonadales</taxon>
        <taxon>Pseudomonadaceae</taxon>
        <taxon>Pseudomonas</taxon>
    </lineage>
</organism>
<protein>
    <recommendedName>
        <fullName evidence="1">Large ribosomal subunit protein bL12</fullName>
    </recommendedName>
    <alternativeName>
        <fullName evidence="2">50S ribosomal protein L7/L12</fullName>
    </alternativeName>
</protein>